<proteinExistence type="inferred from homology"/>
<name>Y448_STRA3</name>
<accession>Q8E6W1</accession>
<feature type="chain" id="PRO_0000162023" description="Uncharacterized RNA methyltransferase gbs0448">
    <location>
        <begin position="1"/>
        <end position="451"/>
    </location>
</feature>
<feature type="domain" description="TRAM" evidence="2">
    <location>
        <begin position="2"/>
        <end position="60"/>
    </location>
</feature>
<feature type="active site" description="Nucleophile" evidence="3">
    <location>
        <position position="408"/>
    </location>
</feature>
<feature type="binding site" evidence="1">
    <location>
        <position position="73"/>
    </location>
    <ligand>
        <name>[4Fe-4S] cluster</name>
        <dbReference type="ChEBI" id="CHEBI:49883"/>
    </ligand>
</feature>
<feature type="binding site" evidence="1">
    <location>
        <position position="79"/>
    </location>
    <ligand>
        <name>[4Fe-4S] cluster</name>
        <dbReference type="ChEBI" id="CHEBI:49883"/>
    </ligand>
</feature>
<feature type="binding site" evidence="1">
    <location>
        <position position="82"/>
    </location>
    <ligand>
        <name>[4Fe-4S] cluster</name>
        <dbReference type="ChEBI" id="CHEBI:49883"/>
    </ligand>
</feature>
<feature type="binding site" evidence="1">
    <location>
        <position position="162"/>
    </location>
    <ligand>
        <name>[4Fe-4S] cluster</name>
        <dbReference type="ChEBI" id="CHEBI:49883"/>
    </ligand>
</feature>
<feature type="binding site" evidence="3">
    <location>
        <position position="283"/>
    </location>
    <ligand>
        <name>S-adenosyl-L-methionine</name>
        <dbReference type="ChEBI" id="CHEBI:59789"/>
    </ligand>
</feature>
<feature type="binding site" evidence="3">
    <location>
        <position position="312"/>
    </location>
    <ligand>
        <name>S-adenosyl-L-methionine</name>
        <dbReference type="ChEBI" id="CHEBI:59789"/>
    </ligand>
</feature>
<feature type="binding site" evidence="3">
    <location>
        <position position="333"/>
    </location>
    <ligand>
        <name>S-adenosyl-L-methionine</name>
        <dbReference type="ChEBI" id="CHEBI:59789"/>
    </ligand>
</feature>
<feature type="binding site" evidence="3">
    <location>
        <position position="381"/>
    </location>
    <ligand>
        <name>S-adenosyl-L-methionine</name>
        <dbReference type="ChEBI" id="CHEBI:59789"/>
    </ligand>
</feature>
<evidence type="ECO:0000250" key="1"/>
<evidence type="ECO:0000255" key="2">
    <source>
        <dbReference type="PROSITE-ProRule" id="PRU00208"/>
    </source>
</evidence>
<evidence type="ECO:0000255" key="3">
    <source>
        <dbReference type="PROSITE-ProRule" id="PRU01024"/>
    </source>
</evidence>
<protein>
    <recommendedName>
        <fullName>Uncharacterized RNA methyltransferase gbs0448</fullName>
        <ecNumber>2.1.1.-</ecNumber>
    </recommendedName>
</protein>
<comment type="similarity">
    <text evidence="3">Belongs to the class I-like SAM-binding methyltransferase superfamily. RNA M5U methyltransferase family.</text>
</comment>
<reference key="1">
    <citation type="journal article" date="2002" name="Mol. Microbiol.">
        <title>Genome sequence of Streptococcus agalactiae, a pathogen causing invasive neonatal disease.</title>
        <authorList>
            <person name="Glaser P."/>
            <person name="Rusniok C."/>
            <person name="Buchrieser C."/>
            <person name="Chevalier F."/>
            <person name="Frangeul L."/>
            <person name="Msadek T."/>
            <person name="Zouine M."/>
            <person name="Couve E."/>
            <person name="Lalioui L."/>
            <person name="Poyart C."/>
            <person name="Trieu-Cuot P."/>
            <person name="Kunst F."/>
        </authorList>
    </citation>
    <scope>NUCLEOTIDE SEQUENCE [LARGE SCALE GENOMIC DNA]</scope>
    <source>
        <strain>NEM316</strain>
    </source>
</reference>
<organism>
    <name type="scientific">Streptococcus agalactiae serotype III (strain NEM316)</name>
    <dbReference type="NCBI Taxonomy" id="211110"/>
    <lineage>
        <taxon>Bacteria</taxon>
        <taxon>Bacillati</taxon>
        <taxon>Bacillota</taxon>
        <taxon>Bacilli</taxon>
        <taxon>Lactobacillales</taxon>
        <taxon>Streptococcaceae</taxon>
        <taxon>Streptococcus</taxon>
    </lineage>
</organism>
<gene>
    <name type="ordered locus">gbs0448</name>
</gene>
<dbReference type="EC" id="2.1.1.-"/>
<dbReference type="EMBL" id="AL766845">
    <property type="protein sequence ID" value="CAD46092.1"/>
    <property type="molecule type" value="Genomic_DNA"/>
</dbReference>
<dbReference type="SMR" id="Q8E6W1"/>
<dbReference type="KEGG" id="san:gbs0448"/>
<dbReference type="eggNOG" id="COG2265">
    <property type="taxonomic scope" value="Bacteria"/>
</dbReference>
<dbReference type="HOGENOM" id="CLU_014689_7_1_9"/>
<dbReference type="Proteomes" id="UP000000823">
    <property type="component" value="Chromosome"/>
</dbReference>
<dbReference type="GO" id="GO:0051539">
    <property type="term" value="F:4 iron, 4 sulfur cluster binding"/>
    <property type="evidence" value="ECO:0007669"/>
    <property type="project" value="UniProtKB-KW"/>
</dbReference>
<dbReference type="GO" id="GO:0046872">
    <property type="term" value="F:metal ion binding"/>
    <property type="evidence" value="ECO:0007669"/>
    <property type="project" value="UniProtKB-KW"/>
</dbReference>
<dbReference type="GO" id="GO:0070041">
    <property type="term" value="F:rRNA (uridine-C5-)-methyltransferase activity"/>
    <property type="evidence" value="ECO:0007669"/>
    <property type="project" value="TreeGrafter"/>
</dbReference>
<dbReference type="GO" id="GO:0070475">
    <property type="term" value="P:rRNA base methylation"/>
    <property type="evidence" value="ECO:0007669"/>
    <property type="project" value="TreeGrafter"/>
</dbReference>
<dbReference type="FunFam" id="3.40.50.150:FF:000009">
    <property type="entry name" value="23S rRNA (Uracil(1939)-C(5))-methyltransferase RlmD"/>
    <property type="match status" value="1"/>
</dbReference>
<dbReference type="FunFam" id="2.40.50.140:FF:000097">
    <property type="entry name" value="23S rRNA (uracil(1939)-C(5))-methyltransferase RlmD"/>
    <property type="match status" value="1"/>
</dbReference>
<dbReference type="FunFam" id="2.40.50.1070:FF:000003">
    <property type="entry name" value="23S rRNA (Uracil-5-)-methyltransferase RumA"/>
    <property type="match status" value="1"/>
</dbReference>
<dbReference type="Gene3D" id="2.40.50.1070">
    <property type="match status" value="1"/>
</dbReference>
<dbReference type="Gene3D" id="2.40.50.140">
    <property type="entry name" value="Nucleic acid-binding proteins"/>
    <property type="match status" value="1"/>
</dbReference>
<dbReference type="Gene3D" id="3.40.50.150">
    <property type="entry name" value="Vaccinia Virus protein VP39"/>
    <property type="match status" value="1"/>
</dbReference>
<dbReference type="InterPro" id="IPR030390">
    <property type="entry name" value="MeTrfase_TrmA_AS"/>
</dbReference>
<dbReference type="InterPro" id="IPR030391">
    <property type="entry name" value="MeTrfase_TrmA_CS"/>
</dbReference>
<dbReference type="InterPro" id="IPR012340">
    <property type="entry name" value="NA-bd_OB-fold"/>
</dbReference>
<dbReference type="InterPro" id="IPR029063">
    <property type="entry name" value="SAM-dependent_MTases_sf"/>
</dbReference>
<dbReference type="InterPro" id="IPR002792">
    <property type="entry name" value="TRAM_dom"/>
</dbReference>
<dbReference type="InterPro" id="IPR010280">
    <property type="entry name" value="U5_MeTrfase_fam"/>
</dbReference>
<dbReference type="NCBIfam" id="TIGR00479">
    <property type="entry name" value="rumA"/>
    <property type="match status" value="1"/>
</dbReference>
<dbReference type="PANTHER" id="PTHR11061:SF45">
    <property type="match status" value="1"/>
</dbReference>
<dbReference type="PANTHER" id="PTHR11061">
    <property type="entry name" value="RNA M5U METHYLTRANSFERASE"/>
    <property type="match status" value="1"/>
</dbReference>
<dbReference type="Pfam" id="PF01938">
    <property type="entry name" value="TRAM"/>
    <property type="match status" value="1"/>
</dbReference>
<dbReference type="Pfam" id="PF05958">
    <property type="entry name" value="tRNA_U5-meth_tr"/>
    <property type="match status" value="1"/>
</dbReference>
<dbReference type="SUPFAM" id="SSF50249">
    <property type="entry name" value="Nucleic acid-binding proteins"/>
    <property type="match status" value="1"/>
</dbReference>
<dbReference type="SUPFAM" id="SSF53335">
    <property type="entry name" value="S-adenosyl-L-methionine-dependent methyltransferases"/>
    <property type="match status" value="1"/>
</dbReference>
<dbReference type="PROSITE" id="PS51687">
    <property type="entry name" value="SAM_MT_RNA_M5U"/>
    <property type="match status" value="1"/>
</dbReference>
<dbReference type="PROSITE" id="PS50926">
    <property type="entry name" value="TRAM"/>
    <property type="match status" value="1"/>
</dbReference>
<dbReference type="PROSITE" id="PS01230">
    <property type="entry name" value="TRMA_1"/>
    <property type="match status" value="1"/>
</dbReference>
<dbReference type="PROSITE" id="PS01231">
    <property type="entry name" value="TRMA_2"/>
    <property type="match status" value="1"/>
</dbReference>
<sequence length="451" mass="51205">MNVVLKQRIPLKIKRMGINGEGIGFYKKTLIFVPGALKGEEVFCQISSVRRNFAEAKLLKINKKSKNRVDPACSIYKECGGCQIMHLQYDKQLEFKTDVIRQALMKFKPEGYENYEIRKTIGMSEPEHYRAKLQFQVRSFGGNVRAGLYAQGTHRLIDIKDCLVQDSLTQEMINRVAELLGKYKLPIYNERKIAGVRTVMIRRAQASGEVQLIFITSKRLDFDDVVIELVREFPELKTVAVNINASKTSDIYGQITEVIWGQESINEEVLDYGFSLSPRAFYQLNPKQTQILYSEAVKALDVKEDDDLIDAYCGVGTIGLAFAGKVKSVRGMDIIPEAIQDAKENALHMGFTNTHYEAGKAEDVIPRWYSEGFRANALIVDPPRTGLDDKLLNTILKMPPEKMVYVSCNTSTLARDLVTLTKVYHVHYIQSVDMFPHTARTEAVVKLQRKE</sequence>
<keyword id="KW-0004">4Fe-4S</keyword>
<keyword id="KW-0408">Iron</keyword>
<keyword id="KW-0411">Iron-sulfur</keyword>
<keyword id="KW-0479">Metal-binding</keyword>
<keyword id="KW-0489">Methyltransferase</keyword>
<keyword id="KW-0949">S-adenosyl-L-methionine</keyword>
<keyword id="KW-0808">Transferase</keyword>